<gene>
    <name type="primary">EIL1</name>
    <name type="ordered locus">At2g27050</name>
    <name type="ORF">T20P8.10</name>
</gene>
<dbReference type="EMBL" id="AF004213">
    <property type="protein sequence ID" value="AAC49746.1"/>
    <property type="molecule type" value="mRNA"/>
</dbReference>
<dbReference type="EMBL" id="AC005623">
    <property type="protein sequence ID" value="AAC77863.1"/>
    <property type="molecule type" value="Genomic_DNA"/>
</dbReference>
<dbReference type="EMBL" id="CP002685">
    <property type="protein sequence ID" value="AEC07930.1"/>
    <property type="molecule type" value="Genomic_DNA"/>
</dbReference>
<dbReference type="EMBL" id="AY065191">
    <property type="protein sequence ID" value="AAL38367.1"/>
    <property type="molecule type" value="mRNA"/>
</dbReference>
<dbReference type="EMBL" id="BT003344">
    <property type="protein sequence ID" value="AAO29962.1"/>
    <property type="molecule type" value="mRNA"/>
</dbReference>
<dbReference type="PIR" id="B84668">
    <property type="entry name" value="B84668"/>
</dbReference>
<dbReference type="RefSeq" id="NP_180273.1">
    <property type="nucleotide sequence ID" value="NM_128263.5"/>
</dbReference>
<dbReference type="SMR" id="Q9SLH0"/>
<dbReference type="BioGRID" id="2599">
    <property type="interactions" value="14"/>
</dbReference>
<dbReference type="DIP" id="DIP-34866N"/>
<dbReference type="FunCoup" id="Q9SLH0">
    <property type="interactions" value="625"/>
</dbReference>
<dbReference type="IntAct" id="Q9SLH0">
    <property type="interactions" value="21"/>
</dbReference>
<dbReference type="STRING" id="3702.Q9SLH0"/>
<dbReference type="GlyGen" id="Q9SLH0">
    <property type="glycosylation" value="1 site"/>
</dbReference>
<dbReference type="PaxDb" id="3702-AT2G27050.1"/>
<dbReference type="ProteomicsDB" id="224495"/>
<dbReference type="EnsemblPlants" id="AT2G27050.1">
    <property type="protein sequence ID" value="AT2G27050.1"/>
    <property type="gene ID" value="AT2G27050"/>
</dbReference>
<dbReference type="GeneID" id="817247"/>
<dbReference type="Gramene" id="AT2G27050.1">
    <property type="protein sequence ID" value="AT2G27050.1"/>
    <property type="gene ID" value="AT2G27050"/>
</dbReference>
<dbReference type="KEGG" id="ath:AT2G27050"/>
<dbReference type="Araport" id="AT2G27050"/>
<dbReference type="TAIR" id="AT2G27050">
    <property type="gene designation" value="EIL1"/>
</dbReference>
<dbReference type="eggNOG" id="ENOG502QQSG">
    <property type="taxonomic scope" value="Eukaryota"/>
</dbReference>
<dbReference type="HOGENOM" id="CLU_027306_0_0_1"/>
<dbReference type="InParanoid" id="Q9SLH0"/>
<dbReference type="OMA" id="NGQEDWW"/>
<dbReference type="PhylomeDB" id="Q9SLH0"/>
<dbReference type="PRO" id="PR:Q9SLH0"/>
<dbReference type="Proteomes" id="UP000006548">
    <property type="component" value="Chromosome 2"/>
</dbReference>
<dbReference type="ExpressionAtlas" id="Q9SLH0">
    <property type="expression patterns" value="baseline and differential"/>
</dbReference>
<dbReference type="GO" id="GO:0005634">
    <property type="term" value="C:nucleus"/>
    <property type="evidence" value="ECO:0007669"/>
    <property type="project" value="UniProtKB-SubCell"/>
</dbReference>
<dbReference type="GO" id="GO:0003700">
    <property type="term" value="F:DNA-binding transcription factor activity"/>
    <property type="evidence" value="ECO:0000250"/>
    <property type="project" value="TAIR"/>
</dbReference>
<dbReference type="GO" id="GO:0000976">
    <property type="term" value="F:transcription cis-regulatory region binding"/>
    <property type="evidence" value="ECO:0000353"/>
    <property type="project" value="TAIR"/>
</dbReference>
<dbReference type="GO" id="GO:0009970">
    <property type="term" value="P:cellular response to sulfate starvation"/>
    <property type="evidence" value="ECO:0000315"/>
    <property type="project" value="TAIR"/>
</dbReference>
<dbReference type="GO" id="GO:0042742">
    <property type="term" value="P:defense response to bacterium"/>
    <property type="evidence" value="ECO:0000316"/>
    <property type="project" value="TAIR"/>
</dbReference>
<dbReference type="GO" id="GO:0009873">
    <property type="term" value="P:ethylene-activated signaling pathway"/>
    <property type="evidence" value="ECO:0000304"/>
    <property type="project" value="TAIR"/>
</dbReference>
<dbReference type="GO" id="GO:0009723">
    <property type="term" value="P:response to ethylene"/>
    <property type="evidence" value="ECO:0000315"/>
    <property type="project" value="TAIR"/>
</dbReference>
<dbReference type="FunFam" id="1.10.3180.10:FF:000001">
    <property type="entry name" value="Ethylene insensitive 3-like 1"/>
    <property type="match status" value="1"/>
</dbReference>
<dbReference type="FunFam" id="1.10.3180.10:FF:000002">
    <property type="entry name" value="Ethylene insensitive 3-like 1"/>
    <property type="match status" value="1"/>
</dbReference>
<dbReference type="Gene3D" id="1.10.3180.10">
    <property type="entry name" value="DNA-binding domain of EIN3-like"/>
    <property type="match status" value="2"/>
</dbReference>
<dbReference type="InterPro" id="IPR006957">
    <property type="entry name" value="EIN3"/>
</dbReference>
<dbReference type="InterPro" id="IPR047091">
    <property type="entry name" value="EIN3-like_DNA-bd"/>
</dbReference>
<dbReference type="InterPro" id="IPR023278">
    <property type="entry name" value="Ethylene_insens-like_DNA-bd"/>
</dbReference>
<dbReference type="PANTHER" id="PTHR33305:SF58">
    <property type="entry name" value="ETHYLENE INSENSITIVE 3-LIKE 1 PROTEIN"/>
    <property type="match status" value="1"/>
</dbReference>
<dbReference type="PANTHER" id="PTHR33305">
    <property type="entry name" value="ETHYLENE INSENSITIVE 3-LIKE 2 PROTEIN"/>
    <property type="match status" value="1"/>
</dbReference>
<dbReference type="Pfam" id="PF04873">
    <property type="entry name" value="EIN3_DNA-bd"/>
    <property type="match status" value="1"/>
</dbReference>
<dbReference type="SUPFAM" id="SSF116768">
    <property type="entry name" value="DNA-binding domain of EIN3-like"/>
    <property type="match status" value="1"/>
</dbReference>
<feature type="chain" id="PRO_0000113499" description="ETHYLENE INSENSITIVE 3-like 1 protein">
    <location>
        <begin position="1"/>
        <end position="584"/>
    </location>
</feature>
<feature type="region of interest" description="Disordered" evidence="3">
    <location>
        <begin position="67"/>
        <end position="93"/>
    </location>
</feature>
<feature type="region of interest" description="Disordered" evidence="3">
    <location>
        <begin position="565"/>
        <end position="584"/>
    </location>
</feature>
<feature type="coiled-coil region" evidence="2">
    <location>
        <begin position="41"/>
        <end position="74"/>
    </location>
</feature>
<feature type="compositionally biased region" description="Basic and acidic residues" evidence="3">
    <location>
        <begin position="67"/>
        <end position="80"/>
    </location>
</feature>
<feature type="sequence conflict" description="In Ref. 1; AAC49746." evidence="6" ref="1">
    <original>E</original>
    <variation>G</variation>
    <location>
        <position position="74"/>
    </location>
</feature>
<evidence type="ECO:0000250" key="1"/>
<evidence type="ECO:0000255" key="2"/>
<evidence type="ECO:0000256" key="3">
    <source>
        <dbReference type="SAM" id="MobiDB-lite"/>
    </source>
</evidence>
<evidence type="ECO:0000269" key="4">
    <source>
    </source>
</evidence>
<evidence type="ECO:0000269" key="5">
    <source>
    </source>
</evidence>
<evidence type="ECO:0000305" key="6"/>
<sequence>MMMFNEMGMYGNMDFFSSSTSLDVCPLPQAEQEPVVEDVDYTDDEMDVDELEKRMWRDKMRLKRLKEQQSKCKEGVDGSKQRQSQEQARRKKMSRAQDGILKYMLKMMEVCKAQGFVYGIIPEKGKPVTGASDNLREWWKDKVRFDRNGPAAIAKYQSENNISGGSNDCNSLVGPTPHTLQELQDTTLGSLLSALMQHCDPPQRRFPLEKGVSPPWWPNGNEEWWPQLGLPNEQGPPPYKKPHDLKKAWKVGVLTAVIKHMSPDIAKIRKLVRQSKCLQDKMTAKESATWLAIINQEEVVARELYPESCPPLSSSSSLGSGSLLINDCSEYDVEGFEKEQHGFDVEERKPEIVMMHPLASFGVAKMQHFPIKEEVATTVNLEFTRKRKQNNDMNVMVMDRSAGYTCENGQCPHSKMNLGFQDRSSRDNHQMVCPYRDNRLAYGASKFHMGGMKLVVPQQPVQPIDLSGVGVPENGQKMITELMAMYDRNVQSNQTPPTLMENQSMVIDAKAAQNQQLNFNSGNQMFMQQGTNNGVNNRFQMVFDSTPFDMAAFDYRDDWQTGAMEGMGKQQQQQQQQQDVSIWF</sequence>
<protein>
    <recommendedName>
        <fullName>ETHYLENE INSENSITIVE 3-like 1 protein</fullName>
    </recommendedName>
</protein>
<name>EIL1_ARATH</name>
<comment type="function">
    <text evidence="4 5">Probable transcription factor acting as a positive regulator in the ethylene response pathway. Could bind the primary ethylene response element present in the ETHYLENE-RESPONSE-FACTOR1 promoter.</text>
</comment>
<comment type="subunit">
    <text evidence="1">Acts as a homodimer to bind the primary ethylene response element.</text>
</comment>
<comment type="subcellular location">
    <subcellularLocation>
        <location evidence="1">Nucleus</location>
    </subcellularLocation>
</comment>
<comment type="miscellaneous">
    <text>Loss-of-function mutations (EIL1-1 and EIL1-2) in the gene show a weak ethylene-insensitive phenotype.</text>
</comment>
<comment type="similarity">
    <text evidence="6">Belongs to the EIN3 family.</text>
</comment>
<accession>Q9SLH0</accession>
<accession>O23114</accession>
<reference key="1">
    <citation type="journal article" date="1997" name="Cell">
        <title>Activation of the ethylene gas response pathway in Arabidopsis by the nuclear protein ETHYLENE-INSENSITIVE3 and related proteins.</title>
        <authorList>
            <person name="Chao Q."/>
            <person name="Rothenberg M."/>
            <person name="Solano R."/>
            <person name="Roman G."/>
            <person name="Terzaghi W."/>
            <person name="Ecker J.R."/>
        </authorList>
    </citation>
    <scope>NUCLEOTIDE SEQUENCE [MRNA]</scope>
    <scope>FUNCTION</scope>
    <source>
        <strain>cv. Columbia</strain>
    </source>
</reference>
<reference key="2">
    <citation type="journal article" date="1999" name="Nature">
        <title>Sequence and analysis of chromosome 2 of the plant Arabidopsis thaliana.</title>
        <authorList>
            <person name="Lin X."/>
            <person name="Kaul S."/>
            <person name="Rounsley S.D."/>
            <person name="Shea T.P."/>
            <person name="Benito M.-I."/>
            <person name="Town C.D."/>
            <person name="Fujii C.Y."/>
            <person name="Mason T.M."/>
            <person name="Bowman C.L."/>
            <person name="Barnstead M.E."/>
            <person name="Feldblyum T.V."/>
            <person name="Buell C.R."/>
            <person name="Ketchum K.A."/>
            <person name="Lee J.J."/>
            <person name="Ronning C.M."/>
            <person name="Koo H.L."/>
            <person name="Moffat K.S."/>
            <person name="Cronin L.A."/>
            <person name="Shen M."/>
            <person name="Pai G."/>
            <person name="Van Aken S."/>
            <person name="Umayam L."/>
            <person name="Tallon L.J."/>
            <person name="Gill J.E."/>
            <person name="Adams M.D."/>
            <person name="Carrera A.J."/>
            <person name="Creasy T.H."/>
            <person name="Goodman H.M."/>
            <person name="Somerville C.R."/>
            <person name="Copenhaver G.P."/>
            <person name="Preuss D."/>
            <person name="Nierman W.C."/>
            <person name="White O."/>
            <person name="Eisen J.A."/>
            <person name="Salzberg S.L."/>
            <person name="Fraser C.M."/>
            <person name="Venter J.C."/>
        </authorList>
    </citation>
    <scope>NUCLEOTIDE SEQUENCE [LARGE SCALE GENOMIC DNA]</scope>
    <source>
        <strain>cv. Columbia</strain>
    </source>
</reference>
<reference key="3">
    <citation type="journal article" date="2017" name="Plant J.">
        <title>Araport11: a complete reannotation of the Arabidopsis thaliana reference genome.</title>
        <authorList>
            <person name="Cheng C.Y."/>
            <person name="Krishnakumar V."/>
            <person name="Chan A.P."/>
            <person name="Thibaud-Nissen F."/>
            <person name="Schobel S."/>
            <person name="Town C.D."/>
        </authorList>
    </citation>
    <scope>GENOME REANNOTATION</scope>
    <source>
        <strain>cv. Columbia</strain>
    </source>
</reference>
<reference key="4">
    <citation type="journal article" date="2003" name="Science">
        <title>Empirical analysis of transcriptional activity in the Arabidopsis genome.</title>
        <authorList>
            <person name="Yamada K."/>
            <person name="Lim J."/>
            <person name="Dale J.M."/>
            <person name="Chen H."/>
            <person name="Shinn P."/>
            <person name="Palm C.J."/>
            <person name="Southwick A.M."/>
            <person name="Wu H.C."/>
            <person name="Kim C.J."/>
            <person name="Nguyen M."/>
            <person name="Pham P.K."/>
            <person name="Cheuk R.F."/>
            <person name="Karlin-Newmann G."/>
            <person name="Liu S.X."/>
            <person name="Lam B."/>
            <person name="Sakano H."/>
            <person name="Wu T."/>
            <person name="Yu G."/>
            <person name="Miranda M."/>
            <person name="Quach H.L."/>
            <person name="Tripp M."/>
            <person name="Chang C.H."/>
            <person name="Lee J.M."/>
            <person name="Toriumi M.J."/>
            <person name="Chan M.M."/>
            <person name="Tang C.C."/>
            <person name="Onodera C.S."/>
            <person name="Deng J.M."/>
            <person name="Akiyama K."/>
            <person name="Ansari Y."/>
            <person name="Arakawa T."/>
            <person name="Banh J."/>
            <person name="Banno F."/>
            <person name="Bowser L."/>
            <person name="Brooks S.Y."/>
            <person name="Carninci P."/>
            <person name="Chao Q."/>
            <person name="Choy N."/>
            <person name="Enju A."/>
            <person name="Goldsmith A.D."/>
            <person name="Gurjal M."/>
            <person name="Hansen N.F."/>
            <person name="Hayashizaki Y."/>
            <person name="Johnson-Hopson C."/>
            <person name="Hsuan V.W."/>
            <person name="Iida K."/>
            <person name="Karnes M."/>
            <person name="Khan S."/>
            <person name="Koesema E."/>
            <person name="Ishida J."/>
            <person name="Jiang P.X."/>
            <person name="Jones T."/>
            <person name="Kawai J."/>
            <person name="Kamiya A."/>
            <person name="Meyers C."/>
            <person name="Nakajima M."/>
            <person name="Narusaka M."/>
            <person name="Seki M."/>
            <person name="Sakurai T."/>
            <person name="Satou M."/>
            <person name="Tamse R."/>
            <person name="Vaysberg M."/>
            <person name="Wallender E.K."/>
            <person name="Wong C."/>
            <person name="Yamamura Y."/>
            <person name="Yuan S."/>
            <person name="Shinozaki K."/>
            <person name="Davis R.W."/>
            <person name="Theologis A."/>
            <person name="Ecker J.R."/>
        </authorList>
    </citation>
    <scope>NUCLEOTIDE SEQUENCE [LARGE SCALE MRNA]</scope>
    <source>
        <strain>cv. Columbia</strain>
    </source>
</reference>
<reference key="5">
    <citation type="journal article" date="1998" name="Genes Dev.">
        <title>Nuclear events in ethylene signaling: a transcriptional cascade mediated by ETHYLENE-INSENSITIVE3 and ETHYLENE-RESPONSE-FACTOR1.</title>
        <authorList>
            <person name="Solano R."/>
            <person name="Stepanova A.N."/>
            <person name="Chao Q."/>
            <person name="Ecker J.R."/>
        </authorList>
    </citation>
    <scope>CHARACTERIZATION</scope>
    <scope>FUNCTION</scope>
</reference>
<reference key="6">
    <citation type="journal article" date="2003" name="Proc. Natl. Acad. Sci. U.S.A.">
        <title>Five components of the ethylene-response pathway identified in a screen for weak ethylene-insensitive mutants in Arabidopsis.</title>
        <authorList>
            <person name="Alonso J.M."/>
            <person name="Stepanova A.N."/>
            <person name="Solano R."/>
            <person name="Wisman E."/>
            <person name="Ferrari S."/>
            <person name="Ausubel F.M."/>
            <person name="Ecker J.R."/>
        </authorList>
    </citation>
    <scope>CHARACTERIZATION</scope>
    <scope>MUTANTS EIL1-1 AND EIL1-2</scope>
</reference>
<keyword id="KW-0010">Activator</keyword>
<keyword id="KW-0175">Coiled coil</keyword>
<keyword id="KW-0238">DNA-binding</keyword>
<keyword id="KW-0936">Ethylene signaling pathway</keyword>
<keyword id="KW-0539">Nucleus</keyword>
<keyword id="KW-1185">Reference proteome</keyword>
<keyword id="KW-0804">Transcription</keyword>
<keyword id="KW-0805">Transcription regulation</keyword>
<proteinExistence type="evidence at protein level"/>
<organism>
    <name type="scientific">Arabidopsis thaliana</name>
    <name type="common">Mouse-ear cress</name>
    <dbReference type="NCBI Taxonomy" id="3702"/>
    <lineage>
        <taxon>Eukaryota</taxon>
        <taxon>Viridiplantae</taxon>
        <taxon>Streptophyta</taxon>
        <taxon>Embryophyta</taxon>
        <taxon>Tracheophyta</taxon>
        <taxon>Spermatophyta</taxon>
        <taxon>Magnoliopsida</taxon>
        <taxon>eudicotyledons</taxon>
        <taxon>Gunneridae</taxon>
        <taxon>Pentapetalae</taxon>
        <taxon>rosids</taxon>
        <taxon>malvids</taxon>
        <taxon>Brassicales</taxon>
        <taxon>Brassicaceae</taxon>
        <taxon>Camelineae</taxon>
        <taxon>Arabidopsis</taxon>
    </lineage>
</organism>